<accession>B0M3D2</accession>
<protein>
    <recommendedName>
        <fullName evidence="4">Extended FMRFamide-8</fullName>
        <shortName evidence="4">FMRFa-8</shortName>
    </recommendedName>
</protein>
<sequence>ARSDNFVRL</sequence>
<dbReference type="GO" id="GO:0005576">
    <property type="term" value="C:extracellular region"/>
    <property type="evidence" value="ECO:0007669"/>
    <property type="project" value="UniProtKB-SubCell"/>
</dbReference>
<dbReference type="GO" id="GO:0007218">
    <property type="term" value="P:neuropeptide signaling pathway"/>
    <property type="evidence" value="ECO:0007669"/>
    <property type="project" value="UniProtKB-KW"/>
</dbReference>
<organism>
    <name type="scientific">Mantophasma kudubergense</name>
    <name type="common">Gladiator</name>
    <name type="synonym">Heel-walker</name>
    <dbReference type="NCBI Taxonomy" id="1037657"/>
    <lineage>
        <taxon>Eukaryota</taxon>
        <taxon>Metazoa</taxon>
        <taxon>Ecdysozoa</taxon>
        <taxon>Arthropoda</taxon>
        <taxon>Hexapoda</taxon>
        <taxon>Insecta</taxon>
        <taxon>Pterygota</taxon>
        <taxon>Neoptera</taxon>
        <taxon>Polyneoptera</taxon>
        <taxon>Mantophasmatodea</taxon>
        <taxon>Mantophasmatidae</taxon>
        <taxon>Mantophasma</taxon>
    </lineage>
</organism>
<feature type="peptide" id="PRO_0000420778" description="Extended FMRFamide-8" evidence="3">
    <location>
        <begin position="1"/>
        <end position="9"/>
    </location>
</feature>
<feature type="modified residue" description="Leucine amide" evidence="3">
    <location>
        <position position="9"/>
    </location>
</feature>
<feature type="unsure residue" description="L or I" evidence="3">
    <location>
        <position position="9"/>
    </location>
</feature>
<proteinExistence type="evidence at protein level"/>
<comment type="function">
    <text evidence="1">FMRFamides and FMRFamide-like peptides are neuropeptides.</text>
</comment>
<comment type="subcellular location">
    <subcellularLocation>
        <location evidence="6">Secreted</location>
    </subcellularLocation>
</comment>
<comment type="similarity">
    <text evidence="2">Belongs to the FARP (FMRF amide related peptide) family.</text>
</comment>
<reference evidence="5" key="1">
    <citation type="journal article" date="2012" name="Syst. Biol.">
        <title>Peptidomics-based phylogeny and biogeography of Mantophasmatodea (Hexapoda).</title>
        <authorList>
            <person name="Predel R."/>
            <person name="Neupert S."/>
            <person name="Huetteroth W."/>
            <person name="Kahnt J."/>
            <person name="Waidelich D."/>
            <person name="Roth S."/>
        </authorList>
    </citation>
    <scope>PROTEIN SEQUENCE</scope>
    <scope>AMIDATION AT LEU-9</scope>
    <source>
        <tissue evidence="3">Thoracic perisympathetic organs</tissue>
    </source>
</reference>
<evidence type="ECO:0000250" key="1">
    <source>
        <dbReference type="UniProtKB" id="P34405"/>
    </source>
</evidence>
<evidence type="ECO:0000255" key="2"/>
<evidence type="ECO:0000269" key="3">
    <source>
    </source>
</evidence>
<evidence type="ECO:0000303" key="4">
    <source>
    </source>
</evidence>
<evidence type="ECO:0000305" key="5"/>
<evidence type="ECO:0000305" key="6">
    <source>
    </source>
</evidence>
<keyword id="KW-0027">Amidation</keyword>
<keyword id="KW-0903">Direct protein sequencing</keyword>
<keyword id="KW-0527">Neuropeptide</keyword>
<keyword id="KW-0964">Secreted</keyword>
<name>FAR8_MANKU</name>